<organism>
    <name type="scientific">Vibrio vulnificus (strain CMCP6)</name>
    <dbReference type="NCBI Taxonomy" id="216895"/>
    <lineage>
        <taxon>Bacteria</taxon>
        <taxon>Pseudomonadati</taxon>
        <taxon>Pseudomonadota</taxon>
        <taxon>Gammaproteobacteria</taxon>
        <taxon>Vibrionales</taxon>
        <taxon>Vibrionaceae</taxon>
        <taxon>Vibrio</taxon>
    </lineage>
</organism>
<comment type="function">
    <text evidence="1">Attaches a formyl group to the free amino group of methionyl-tRNA(fMet). The formyl group appears to play a dual role in the initiator identity of N-formylmethionyl-tRNA by promoting its recognition by IF2 and preventing the misappropriation of this tRNA by the elongation apparatus.</text>
</comment>
<comment type="catalytic activity">
    <reaction evidence="1">
        <text>L-methionyl-tRNA(fMet) + (6R)-10-formyltetrahydrofolate = N-formyl-L-methionyl-tRNA(fMet) + (6S)-5,6,7,8-tetrahydrofolate + H(+)</text>
        <dbReference type="Rhea" id="RHEA:24380"/>
        <dbReference type="Rhea" id="RHEA-COMP:9952"/>
        <dbReference type="Rhea" id="RHEA-COMP:9953"/>
        <dbReference type="ChEBI" id="CHEBI:15378"/>
        <dbReference type="ChEBI" id="CHEBI:57453"/>
        <dbReference type="ChEBI" id="CHEBI:78530"/>
        <dbReference type="ChEBI" id="CHEBI:78844"/>
        <dbReference type="ChEBI" id="CHEBI:195366"/>
        <dbReference type="EC" id="2.1.2.9"/>
    </reaction>
</comment>
<comment type="similarity">
    <text evidence="1">Belongs to the Fmt family.</text>
</comment>
<accession>Q8DDE4</accession>
<dbReference type="EC" id="2.1.2.9" evidence="1"/>
<dbReference type="EMBL" id="AE016795">
    <property type="protein sequence ID" value="AAO09534.1"/>
    <property type="molecule type" value="Genomic_DNA"/>
</dbReference>
<dbReference type="RefSeq" id="WP_011079080.1">
    <property type="nucleotide sequence ID" value="NC_004459.3"/>
</dbReference>
<dbReference type="SMR" id="Q8DDE4"/>
<dbReference type="KEGG" id="vvu:VV1_1047"/>
<dbReference type="HOGENOM" id="CLU_033347_1_2_6"/>
<dbReference type="Proteomes" id="UP000002275">
    <property type="component" value="Chromosome 1"/>
</dbReference>
<dbReference type="GO" id="GO:0005829">
    <property type="term" value="C:cytosol"/>
    <property type="evidence" value="ECO:0007669"/>
    <property type="project" value="TreeGrafter"/>
</dbReference>
<dbReference type="GO" id="GO:0004479">
    <property type="term" value="F:methionyl-tRNA formyltransferase activity"/>
    <property type="evidence" value="ECO:0007669"/>
    <property type="project" value="UniProtKB-UniRule"/>
</dbReference>
<dbReference type="CDD" id="cd08646">
    <property type="entry name" value="FMT_core_Met-tRNA-FMT_N"/>
    <property type="match status" value="1"/>
</dbReference>
<dbReference type="CDD" id="cd08704">
    <property type="entry name" value="Met_tRNA_FMT_C"/>
    <property type="match status" value="1"/>
</dbReference>
<dbReference type="FunFam" id="3.40.50.170:FF:000003">
    <property type="entry name" value="Methionyl-tRNA formyltransferase"/>
    <property type="match status" value="1"/>
</dbReference>
<dbReference type="Gene3D" id="3.10.25.10">
    <property type="entry name" value="Formyl transferase, C-terminal domain"/>
    <property type="match status" value="1"/>
</dbReference>
<dbReference type="Gene3D" id="3.40.50.170">
    <property type="entry name" value="Formyl transferase, N-terminal domain"/>
    <property type="match status" value="1"/>
</dbReference>
<dbReference type="HAMAP" id="MF_00182">
    <property type="entry name" value="Formyl_trans"/>
    <property type="match status" value="1"/>
</dbReference>
<dbReference type="InterPro" id="IPR005794">
    <property type="entry name" value="Fmt"/>
</dbReference>
<dbReference type="InterPro" id="IPR005793">
    <property type="entry name" value="Formyl_trans_C"/>
</dbReference>
<dbReference type="InterPro" id="IPR037022">
    <property type="entry name" value="Formyl_trans_C_sf"/>
</dbReference>
<dbReference type="InterPro" id="IPR002376">
    <property type="entry name" value="Formyl_transf_N"/>
</dbReference>
<dbReference type="InterPro" id="IPR036477">
    <property type="entry name" value="Formyl_transf_N_sf"/>
</dbReference>
<dbReference type="InterPro" id="IPR011034">
    <property type="entry name" value="Formyl_transferase-like_C_sf"/>
</dbReference>
<dbReference type="InterPro" id="IPR001555">
    <property type="entry name" value="GART_AS"/>
</dbReference>
<dbReference type="InterPro" id="IPR044135">
    <property type="entry name" value="Met-tRNA-FMT_C"/>
</dbReference>
<dbReference type="InterPro" id="IPR041711">
    <property type="entry name" value="Met-tRNA-FMT_N"/>
</dbReference>
<dbReference type="NCBIfam" id="TIGR00460">
    <property type="entry name" value="fmt"/>
    <property type="match status" value="1"/>
</dbReference>
<dbReference type="PANTHER" id="PTHR11138">
    <property type="entry name" value="METHIONYL-TRNA FORMYLTRANSFERASE"/>
    <property type="match status" value="1"/>
</dbReference>
<dbReference type="PANTHER" id="PTHR11138:SF5">
    <property type="entry name" value="METHIONYL-TRNA FORMYLTRANSFERASE, MITOCHONDRIAL"/>
    <property type="match status" value="1"/>
</dbReference>
<dbReference type="Pfam" id="PF02911">
    <property type="entry name" value="Formyl_trans_C"/>
    <property type="match status" value="1"/>
</dbReference>
<dbReference type="Pfam" id="PF00551">
    <property type="entry name" value="Formyl_trans_N"/>
    <property type="match status" value="1"/>
</dbReference>
<dbReference type="SUPFAM" id="SSF50486">
    <property type="entry name" value="FMT C-terminal domain-like"/>
    <property type="match status" value="1"/>
</dbReference>
<dbReference type="SUPFAM" id="SSF53328">
    <property type="entry name" value="Formyltransferase"/>
    <property type="match status" value="1"/>
</dbReference>
<dbReference type="PROSITE" id="PS00373">
    <property type="entry name" value="GART"/>
    <property type="match status" value="1"/>
</dbReference>
<name>FMT_VIBVU</name>
<reference key="1">
    <citation type="submission" date="2002-12" db="EMBL/GenBank/DDBJ databases">
        <title>Complete genome sequence of Vibrio vulnificus CMCP6.</title>
        <authorList>
            <person name="Rhee J.H."/>
            <person name="Kim S.Y."/>
            <person name="Chung S.S."/>
            <person name="Kim J.J."/>
            <person name="Moon Y.H."/>
            <person name="Jeong H."/>
            <person name="Choy H.E."/>
        </authorList>
    </citation>
    <scope>NUCLEOTIDE SEQUENCE [LARGE SCALE GENOMIC DNA]</scope>
    <source>
        <strain>CMCP6</strain>
    </source>
</reference>
<evidence type="ECO:0000255" key="1">
    <source>
        <dbReference type="HAMAP-Rule" id="MF_00182"/>
    </source>
</evidence>
<keyword id="KW-0648">Protein biosynthesis</keyword>
<keyword id="KW-0808">Transferase</keyword>
<protein>
    <recommendedName>
        <fullName evidence="1">Methionyl-tRNA formyltransferase</fullName>
        <ecNumber evidence="1">2.1.2.9</ecNumber>
    </recommendedName>
</protein>
<gene>
    <name evidence="1" type="primary">fmt</name>
    <name type="ordered locus">VV1_1047</name>
</gene>
<sequence length="315" mass="34079">MSKPLRIVFAGTPDFAAQHLAALLSSEHEVIAVYTQPDRPAGRGKKLTASPVKTIALEHNIPVYQPENFKSDEAKQALADLNADIMVVVAYGLLLPQAVLDTPKLGCINVHGSILPRWRGAAPIQRSIWAGDAETGVTIMQMDIGLDTGDMLKIATLPIDASDTSATMYDKLAKLGPVVLVECLADIAAGTAIAIKQDDERANYAKKLSKEEARINWQDDAEHIERCVRAFNPWPMSHFEVAENSIKVWQSRVEASSHDAPAGTILKADKSGIYVATGHGCLVLEQIQIPGKKAMPVQDVLNARAAWFEVGSVLS</sequence>
<proteinExistence type="inferred from homology"/>
<feature type="chain" id="PRO_0000083083" description="Methionyl-tRNA formyltransferase">
    <location>
        <begin position="1"/>
        <end position="315"/>
    </location>
</feature>
<feature type="binding site" evidence="1">
    <location>
        <begin position="113"/>
        <end position="116"/>
    </location>
    <ligand>
        <name>(6S)-5,6,7,8-tetrahydrofolate</name>
        <dbReference type="ChEBI" id="CHEBI:57453"/>
    </ligand>
</feature>